<proteinExistence type="evidence at protein level"/>
<comment type="function">
    <text evidence="6">Transcription factor that binds to the octamer motif (5'-ATTTGCAT-3'). Forms a trimeric complex with SOX2 or SOX15 on DNA and controls the expression of a number of genes involved in embryonic development such as YES1, FGF4, UTF1 and ZFP206. Critical for early embryogenesis and for embryonic stem cell pluripotency.</text>
</comment>
<comment type="subunit">
    <text evidence="1 7 8 11">Interacts with PKM. Interacts with WWP2. Interacts with UBE2I and ZSCAN10 (By similarity). Interacts with PCGF1 (PubMed:26687479). Interacts with ESRRB; recruits ESRRB near the POU5F1-SOX2 element in the NANOG proximal promoter; the interaction is DNA independent (By similarity). Interacts with ZNF322 (By similarity). Interacts with MAPK8 and MAPK9; the interaction allows MAPK8 and MAPK9 to phosphorylate POU5F1 on Ser-355 (By similarity). Interacts (when phosphorylated on Ser-355) with FBXW8 (By similarity). Interacts with FBXW4 (By similarity). Interacts with SOX2 and SOX15; binds synergistically with either SOX2 or SOX15 to DNA (By similarity). Interacts with DDX56 (By similarity).</text>
</comment>
<comment type="interaction">
    <interactant intactId="EBI-475687">
        <id>Q01860</id>
    </interactant>
    <interactant intactId="EBI-932887">
        <id>P49711</id>
        <label>CTCF</label>
    </interactant>
    <organismsDiffer>false</organismsDiffer>
    <experiments>2</experiments>
</comment>
<comment type="interaction">
    <interactant intactId="EBI-475687">
        <id>Q01860</id>
    </interactant>
    <interactant intactId="EBI-475674">
        <id>Q9UJU5</id>
        <label>FOXD3</label>
    </interactant>
    <organismsDiffer>false</organismsDiffer>
    <experiments>2</experiments>
</comment>
<comment type="interaction">
    <interactant intactId="EBI-475687">
        <id>Q01860</id>
    </interactant>
    <interactant intactId="EBI-1783068">
        <id>O95983</id>
        <label>MBD3</label>
    </interactant>
    <organismsDiffer>false</organismsDiffer>
    <experiments>3</experiments>
</comment>
<comment type="interaction">
    <interactant intactId="EBI-475687">
        <id>Q01860</id>
    </interactant>
    <interactant intactId="EBI-6124081">
        <id>P48431</id>
        <label>SOX2</label>
    </interactant>
    <organismsDiffer>false</organismsDiffer>
    <experiments>2</experiments>
</comment>
<comment type="interaction">
    <interactant intactId="EBI-475687">
        <id>Q01860</id>
    </interactant>
    <interactant intactId="EBI-743923">
        <id>O00308</id>
        <label>WWP2</label>
    </interactant>
    <organismsDiffer>false</organismsDiffer>
    <experiments>4</experiments>
</comment>
<comment type="interaction">
    <interactant intactId="EBI-475687">
        <id>Q01860</id>
    </interactant>
    <interactant intactId="EBI-7453955">
        <id>Q8JSK4</id>
        <label>E1A</label>
    </interactant>
    <organismsDiffer>true</organismsDiffer>
    <experiments>2</experiments>
</comment>
<comment type="interaction">
    <interactant intactId="EBI-475687">
        <id>Q01860</id>
    </interactant>
    <interactant intactId="EBI-6665811">
        <id>P63158</id>
        <label>Hmgb1</label>
    </interactant>
    <organismsDiffer>true</organismsDiffer>
    <experiments>3</experiments>
</comment>
<comment type="interaction">
    <interactant intactId="EBI-475687">
        <id>Q01860</id>
    </interactant>
    <interactant intactId="EBI-6947456">
        <id>P03259</id>
    </interactant>
    <organismsDiffer>true</organismsDiffer>
    <experiments>2</experiments>
</comment>
<comment type="subcellular location">
    <subcellularLocation>
        <location>Cytoplasm</location>
    </subcellularLocation>
    <subcellularLocation>
        <location>Nucleus</location>
    </subcellularLocation>
    <text evidence="1 7 8 10">Expressed in a diffuse and slightly punctuate pattern. Colocalizes with MAPK8 and MAPK9 in the nucleus.</text>
</comment>
<comment type="alternative products">
    <event type="alternative splicing"/>
    <isoform>
        <id>Q01860-1</id>
        <name>A</name>
        <name>Oct-3A</name>
        <name>Oct3A</name>
        <sequence type="displayed"/>
    </isoform>
    <isoform>
        <id>Q01860-2</id>
        <name>B</name>
        <name>Oct-3B</name>
        <name>Oct3B</name>
        <sequence type="described" ref="VSP_002333"/>
    </isoform>
</comment>
<comment type="tissue specificity">
    <text evidence="5 14">Expressed in developing brain. Highest levels found in specific cell layers of the cortex, the olfactory bulb, the hippocampus and the cerebellum. Low levels of expression in adult tissues.</text>
</comment>
<comment type="developmental stage">
    <text evidence="8">Highly expressed in undifferentiated embryonic stem cells and expression decreases gradually after embryoid body (EB) formation.</text>
</comment>
<comment type="induction">
    <text evidence="7 12">Transcriptional activity is positively regulated by PKM (PubMed:18191611). Upon cell differentiation, expression is repressed by NR6A1 (PubMed:26769970).</text>
</comment>
<comment type="domain">
    <text evidence="7">The POU-specific domain mediates interaction with PKM.</text>
</comment>
<comment type="domain">
    <text evidence="13">The 9aaTAD motif is a transactivation domain present in a large number of yeast and animal transcription factors.</text>
</comment>
<comment type="PTM">
    <text evidence="1">Sumoylation enhances the protein stability, DNA binding and transactivation activity. Sumoylation is required for enhanced YES1 expression.</text>
</comment>
<comment type="PTM">
    <text evidence="1">Ubiquitinated; undergoes 'Lys-63'-linked polyubiquitination by WWP2 leading to proteasomal degradation.</text>
</comment>
<comment type="PTM">
    <text evidence="9 10">ERK1/2-mediated phosphorylation at Ser-111 promotes nuclear exclusion and proteasomal degradation. Phosphorylation at Thr-235 and Ser-236 decrease DNA-binding and alters ability to activate transcription.</text>
</comment>
<comment type="biotechnology">
    <text evidence="6">POU5F1/OCT4, SOX2, MYC/c-Myc and KLF4 are the four Yamanaka factors. When combined, these factors are sufficient to reprogram differentiated cells to an embryonic-like state designated iPS (induced pluripotent stem) cells. iPS cells exhibit the morphology and growth properties of ES cells and express ES cell marker genes.</text>
</comment>
<comment type="miscellaneous">
    <text>Several pseudogenes of POU5F1 have been described on chromosomes 1, 3, 8, 10 and 12. 2 of them, localized in chromosomes 8 and 10, are transcribed in cancer tissues but not in normal ones and may be involved in the regulation of POU5F1 gene activity in carcinogenesis.</text>
</comment>
<comment type="similarity">
    <text evidence="16">Belongs to the POU transcription factor family. Class-5 subfamily.</text>
</comment>
<comment type="online information" name="Wikipedia">
    <link uri="https://en.wikipedia.org/wiki/Oct-4"/>
    <text>Oct-4 entry</text>
</comment>
<accession>Q01860</accession>
<accession>A6NCS1</accession>
<accession>A6NLL8</accession>
<accession>D2IYK4</accession>
<accession>P31359</accession>
<accession>Q15167</accession>
<accession>Q15168</accession>
<accession>Q16422</accession>
<accession>Q5STF3</accession>
<accession>Q5STF4</accession>
<evidence type="ECO:0000250" key="1">
    <source>
        <dbReference type="UniProtKB" id="P20263"/>
    </source>
</evidence>
<evidence type="ECO:0000255" key="2">
    <source>
        <dbReference type="PROSITE-ProRule" id="PRU00108"/>
    </source>
</evidence>
<evidence type="ECO:0000255" key="3">
    <source>
        <dbReference type="PROSITE-ProRule" id="PRU00530"/>
    </source>
</evidence>
<evidence type="ECO:0000256" key="4">
    <source>
        <dbReference type="SAM" id="MobiDB-lite"/>
    </source>
</evidence>
<evidence type="ECO:0000269" key="5">
    <source>
    </source>
</evidence>
<evidence type="ECO:0000269" key="6">
    <source>
    </source>
</evidence>
<evidence type="ECO:0000269" key="7">
    <source>
    </source>
</evidence>
<evidence type="ECO:0000269" key="8">
    <source>
    </source>
</evidence>
<evidence type="ECO:0000269" key="9">
    <source>
    </source>
</evidence>
<evidence type="ECO:0000269" key="10">
    <source>
    </source>
</evidence>
<evidence type="ECO:0000269" key="11">
    <source>
    </source>
</evidence>
<evidence type="ECO:0000269" key="12">
    <source>
    </source>
</evidence>
<evidence type="ECO:0000269" key="13">
    <source>
    </source>
</evidence>
<evidence type="ECO:0000269" key="14">
    <source>
    </source>
</evidence>
<evidence type="ECO:0000303" key="15">
    <source>
    </source>
</evidence>
<evidence type="ECO:0000305" key="16"/>
<evidence type="ECO:0007829" key="17">
    <source>
        <dbReference type="PDB" id="8G88"/>
    </source>
</evidence>
<sequence>MAGHLASDFAFSPPPGGGGDGPGGPEPGWVDPRTWLSFQGPPGGPGIGPGVGPGSEVWGIPPCPPPYEFCGGMAYCGPQVGVGLVPQGGLETSQPEGEAGVGVESNSDGASPEPCTVTPGAVKLEKEKLEQNPEESQDIKALQKELEQFAKLLKQKRITLGYTQADVGLTLGVLFGKVFSQTTICRFEALQLSFKNMCKLRPLLQKWVEEADNNENLQEICKAETLVQARKRKRTSIENRVRGNLENLFLQCPKPTLQQISHIAQQLGLEKDVVRVWFCNRRQKGKRSSSDYAQREDFEAAGSPFSGGPVSFPLAPGPHFGTPGYGSPHFTALYSSVPFPEGEAFPPVSVTTLGSPMHSN</sequence>
<gene>
    <name type="primary">POU5F1</name>
    <name type="synonym">OCT3</name>
    <name type="synonym">OCT4</name>
    <name type="synonym">OTF3</name>
</gene>
<dbReference type="EMBL" id="Z11898">
    <property type="protein sequence ID" value="CAA77951.1"/>
    <property type="molecule type" value="mRNA"/>
</dbReference>
<dbReference type="EMBL" id="Z11899">
    <property type="protein sequence ID" value="CAA77952.1"/>
    <property type="molecule type" value="mRNA"/>
</dbReference>
<dbReference type="EMBL" id="GQ472773">
    <property type="protein sequence ID" value="ACZ95700.1"/>
    <property type="molecule type" value="Genomic_DNA"/>
</dbReference>
<dbReference type="EMBL" id="AB088113">
    <property type="protein sequence ID" value="BAC54946.1"/>
    <property type="molecule type" value="Genomic_DNA"/>
</dbReference>
<dbReference type="EMBL" id="AB202105">
    <property type="protein sequence ID" value="BAE78630.1"/>
    <property type="molecule type" value="Genomic_DNA"/>
</dbReference>
<dbReference type="EMBL" id="AB103619">
    <property type="protein sequence ID" value="BAF31281.1"/>
    <property type="molecule type" value="Genomic_DNA"/>
</dbReference>
<dbReference type="EMBL" id="BA000025">
    <property type="protein sequence ID" value="BAB63311.1"/>
    <property type="molecule type" value="Genomic_DNA"/>
</dbReference>
<dbReference type="EMBL" id="AL662833">
    <property type="status" value="NOT_ANNOTATED_CDS"/>
    <property type="molecule type" value="Genomic_DNA"/>
</dbReference>
<dbReference type="EMBL" id="AL662844">
    <property type="status" value="NOT_ANNOTATED_CDS"/>
    <property type="molecule type" value="Genomic_DNA"/>
</dbReference>
<dbReference type="EMBL" id="AL773544">
    <property type="status" value="NOT_ANNOTATED_CDS"/>
    <property type="molecule type" value="Genomic_DNA"/>
</dbReference>
<dbReference type="EMBL" id="BX088580">
    <property type="status" value="NOT_ANNOTATED_CDS"/>
    <property type="molecule type" value="Genomic_DNA"/>
</dbReference>
<dbReference type="EMBL" id="CR759815">
    <property type="status" value="NOT_ANNOTATED_CDS"/>
    <property type="molecule type" value="Genomic_DNA"/>
</dbReference>
<dbReference type="EMBL" id="CR388229">
    <property type="status" value="NOT_ANNOTATED_CDS"/>
    <property type="molecule type" value="Genomic_DNA"/>
</dbReference>
<dbReference type="EMBL" id="CR847794">
    <property type="status" value="NOT_ANNOTATED_CDS"/>
    <property type="molecule type" value="Genomic_DNA"/>
</dbReference>
<dbReference type="EMBL" id="CH471081">
    <property type="protein sequence ID" value="EAX03367.1"/>
    <property type="molecule type" value="Genomic_DNA"/>
</dbReference>
<dbReference type="EMBL" id="CH471081">
    <property type="protein sequence ID" value="EAX03368.1"/>
    <property type="molecule type" value="Genomic_DNA"/>
</dbReference>
<dbReference type="EMBL" id="BC117435">
    <property type="protein sequence ID" value="AAI17436.1"/>
    <property type="molecule type" value="mRNA"/>
</dbReference>
<dbReference type="EMBL" id="BC117437">
    <property type="protein sequence ID" value="AAI17438.1"/>
    <property type="molecule type" value="mRNA"/>
</dbReference>
<dbReference type="EMBL" id="Z21963">
    <property type="protein sequence ID" value="CAA79974.1"/>
    <property type="molecule type" value="mRNA"/>
</dbReference>
<dbReference type="EMBL" id="Z21964">
    <property type="protein sequence ID" value="CAA79975.1"/>
    <property type="molecule type" value="mRNA"/>
</dbReference>
<dbReference type="EMBL" id="S81255">
    <property type="protein sequence ID" value="AAB35990.1"/>
    <property type="molecule type" value="mRNA"/>
</dbReference>
<dbReference type="CCDS" id="CCDS34391.1">
    <molecule id="Q01860-1"/>
</dbReference>
<dbReference type="PIR" id="S25561">
    <property type="entry name" value="S25561"/>
</dbReference>
<dbReference type="PIR" id="S32652">
    <property type="entry name" value="S32652"/>
</dbReference>
<dbReference type="RefSeq" id="NP_001272916.1">
    <molecule id="Q01860-2"/>
    <property type="nucleotide sequence ID" value="NM_001285987.1"/>
</dbReference>
<dbReference type="RefSeq" id="NP_002692.2">
    <molecule id="Q01860-1"/>
    <property type="nucleotide sequence ID" value="NM_002701.5"/>
</dbReference>
<dbReference type="PDB" id="6T90">
    <property type="method" value="EM"/>
    <property type="resolution" value="3.05 A"/>
    <property type="chains" value="K=1-360"/>
</dbReference>
<dbReference type="PDB" id="6YOV">
    <property type="method" value="EM"/>
    <property type="resolution" value="3.42 A"/>
    <property type="chains" value="K=1-360"/>
</dbReference>
<dbReference type="PDB" id="7U0G">
    <property type="method" value="EM"/>
    <property type="resolution" value="2.60 A"/>
    <property type="chains" value="K/L/M=138-290"/>
</dbReference>
<dbReference type="PDB" id="7U0I">
    <property type="method" value="EM"/>
    <property type="resolution" value="2.60 A"/>
    <property type="chains" value="L/M=138-292"/>
</dbReference>
<dbReference type="PDB" id="8G87">
    <property type="method" value="EM"/>
    <property type="resolution" value="5.70 A"/>
    <property type="chains" value="X=1-360"/>
</dbReference>
<dbReference type="PDB" id="8G88">
    <property type="method" value="EM"/>
    <property type="resolution" value="4.80 A"/>
    <property type="chains" value="X=1-360"/>
</dbReference>
<dbReference type="PDB" id="8G8B">
    <property type="method" value="EM"/>
    <property type="resolution" value="4.30 A"/>
    <property type="chains" value="X=1-360"/>
</dbReference>
<dbReference type="PDB" id="8G8E">
    <property type="method" value="EM"/>
    <property type="resolution" value="4.20 A"/>
    <property type="chains" value="X=1-360"/>
</dbReference>
<dbReference type="PDB" id="8G8G">
    <property type="method" value="EM"/>
    <property type="resolution" value="3.20 A"/>
    <property type="chains" value="X=1-360"/>
</dbReference>
<dbReference type="PDB" id="8OTS">
    <property type="method" value="EM"/>
    <property type="resolution" value="3.30 A"/>
    <property type="chains" value="K=1-273"/>
</dbReference>
<dbReference type="PDB" id="8SPS">
    <property type="method" value="EM"/>
    <property type="resolution" value="3.00 A"/>
    <property type="chains" value="L/M=138-290"/>
</dbReference>
<dbReference type="PDB" id="8SPU">
    <property type="method" value="EM"/>
    <property type="resolution" value="2.80 A"/>
    <property type="chains" value="L=138-290"/>
</dbReference>
<dbReference type="PDBsum" id="6T90"/>
<dbReference type="PDBsum" id="6YOV"/>
<dbReference type="PDBsum" id="7U0G"/>
<dbReference type="PDBsum" id="7U0I"/>
<dbReference type="PDBsum" id="8G87"/>
<dbReference type="PDBsum" id="8G88"/>
<dbReference type="PDBsum" id="8G8B"/>
<dbReference type="PDBsum" id="8G8E"/>
<dbReference type="PDBsum" id="8G8G"/>
<dbReference type="PDBsum" id="8OTS"/>
<dbReference type="PDBsum" id="8SPS"/>
<dbReference type="PDBsum" id="8SPU"/>
<dbReference type="EMDB" id="EMD-10406"/>
<dbReference type="EMDB" id="EMD-10864"/>
<dbReference type="EMDB" id="EMD-17183"/>
<dbReference type="EMDB" id="EMD-26258"/>
<dbReference type="EMDB" id="EMD-26260"/>
<dbReference type="EMDB" id="EMD-29841"/>
<dbReference type="EMDB" id="EMD-29843"/>
<dbReference type="EMDB" id="EMD-29845"/>
<dbReference type="EMDB" id="EMD-29846"/>
<dbReference type="EMDB" id="EMD-29850"/>
<dbReference type="EMDB" id="EMD-40683"/>
<dbReference type="EMDB" id="EMD-40686"/>
<dbReference type="SMR" id="Q01860"/>
<dbReference type="BioGRID" id="111456">
    <property type="interactions" value="334"/>
</dbReference>
<dbReference type="CORUM" id="Q01860"/>
<dbReference type="DIP" id="DIP-33440N"/>
<dbReference type="ELM" id="Q01860"/>
<dbReference type="FunCoup" id="Q01860">
    <property type="interactions" value="967"/>
</dbReference>
<dbReference type="IntAct" id="Q01860">
    <property type="interactions" value="21"/>
</dbReference>
<dbReference type="MINT" id="Q01860"/>
<dbReference type="STRING" id="9606.ENSP00000259915"/>
<dbReference type="BindingDB" id="Q01860"/>
<dbReference type="ChEMBL" id="CHEMBL3580526"/>
<dbReference type="DrugBank" id="DB00988">
    <property type="generic name" value="Dopamine"/>
</dbReference>
<dbReference type="DrugBank" id="DB00368">
    <property type="generic name" value="Norepinephrine"/>
</dbReference>
<dbReference type="GlyGen" id="Q01860">
    <property type="glycosylation" value="10 sites, 1 O-linked glycan (9 sites)"/>
</dbReference>
<dbReference type="iPTMnet" id="Q01860"/>
<dbReference type="PhosphoSitePlus" id="Q01860"/>
<dbReference type="SwissPalm" id="Q01860"/>
<dbReference type="BioMuta" id="POU5F1"/>
<dbReference type="DMDM" id="400659"/>
<dbReference type="jPOST" id="Q01860"/>
<dbReference type="MassIVE" id="Q01860"/>
<dbReference type="PaxDb" id="9606-ENSP00000259915"/>
<dbReference type="PeptideAtlas" id="Q01860"/>
<dbReference type="ProteomicsDB" id="58011">
    <molecule id="Q01860-1"/>
</dbReference>
<dbReference type="ProteomicsDB" id="58012">
    <molecule id="Q01860-2"/>
</dbReference>
<dbReference type="Antibodypedia" id="26854">
    <property type="antibodies" value="1532 antibodies from 52 providers"/>
</dbReference>
<dbReference type="DNASU" id="5460"/>
<dbReference type="Ensembl" id="ENST00000259915.13">
    <molecule id="Q01860-1"/>
    <property type="protein sequence ID" value="ENSP00000259915.7"/>
    <property type="gene ID" value="ENSG00000204531.21"/>
</dbReference>
<dbReference type="Ensembl" id="ENST00000376243.8">
    <molecule id="Q01860-2"/>
    <property type="protein sequence ID" value="ENSP00000365419.4"/>
    <property type="gene ID" value="ENSG00000206454.12"/>
</dbReference>
<dbReference type="Ensembl" id="ENST00000383524.4">
    <molecule id="Q01860-1"/>
    <property type="protein sequence ID" value="ENSP00000373016.4"/>
    <property type="gene ID" value="ENSG00000206454.12"/>
</dbReference>
<dbReference type="Ensembl" id="ENST00000412166.6">
    <molecule id="Q01860-2"/>
    <property type="protein sequence ID" value="ENSP00000387646.2"/>
    <property type="gene ID" value="ENSG00000229094.9"/>
</dbReference>
<dbReference type="Ensembl" id="ENST00000419095.2">
    <molecule id="Q01860-2"/>
    <property type="protein sequence ID" value="ENSP00000413622.2"/>
    <property type="gene ID" value="ENSG00000235068.9"/>
</dbReference>
<dbReference type="Ensembl" id="ENST00000429314.2">
    <molecule id="Q01860-2"/>
    <property type="protein sequence ID" value="ENSP00000387619.2"/>
    <property type="gene ID" value="ENSG00000237582.10"/>
</dbReference>
<dbReference type="Ensembl" id="ENST00000429603.2">
    <molecule id="Q01860-1"/>
    <property type="protein sequence ID" value="ENSP00000392877.2"/>
    <property type="gene ID" value="ENSG00000233911.9"/>
</dbReference>
<dbReference type="Ensembl" id="ENST00000433063.6">
    <molecule id="Q01860-1"/>
    <property type="protein sequence ID" value="ENSP00000405041.2"/>
    <property type="gene ID" value="ENSG00000235068.9"/>
</dbReference>
<dbReference type="Ensembl" id="ENST00000433348.2">
    <molecule id="Q01860-2"/>
    <property type="protein sequence ID" value="ENSP00000412665.2"/>
    <property type="gene ID" value="ENSG00000230336.9"/>
</dbReference>
<dbReference type="Ensembl" id="ENST00000434616.2">
    <molecule id="Q01860-1"/>
    <property type="protein sequence ID" value="ENSP00000388842.2"/>
    <property type="gene ID" value="ENSG00000229094.9"/>
</dbReference>
<dbReference type="Ensembl" id="ENST00000437747.6">
    <molecule id="Q01860-1"/>
    <property type="protein sequence ID" value="ENSP00000391681.2"/>
    <property type="gene ID" value="ENSG00000237582.10"/>
</dbReference>
<dbReference type="Ensembl" id="ENST00000451077.6">
    <molecule id="Q01860-2"/>
    <property type="protein sequence ID" value="ENSP00000391507.2"/>
    <property type="gene ID" value="ENSG00000233911.9"/>
</dbReference>
<dbReference type="Ensembl" id="ENST00000454714.6">
    <molecule id="Q01860-1"/>
    <property type="protein sequence ID" value="ENSP00000400047.2"/>
    <property type="gene ID" value="ENSG00000230336.9"/>
</dbReference>
<dbReference type="GeneID" id="5460"/>
<dbReference type="KEGG" id="hsa:5460"/>
<dbReference type="MANE-Select" id="ENST00000259915.13">
    <property type="protein sequence ID" value="ENSP00000259915.7"/>
    <property type="RefSeq nucleotide sequence ID" value="NM_002701.6"/>
    <property type="RefSeq protein sequence ID" value="NP_002692.2"/>
</dbReference>
<dbReference type="UCSC" id="uc003nsv.4">
    <molecule id="Q01860-1"/>
    <property type="organism name" value="human"/>
</dbReference>
<dbReference type="AGR" id="HGNC:9221"/>
<dbReference type="CTD" id="5460"/>
<dbReference type="DisGeNET" id="5460"/>
<dbReference type="GeneCards" id="POU5F1"/>
<dbReference type="HGNC" id="HGNC:9221">
    <property type="gene designation" value="POU5F1"/>
</dbReference>
<dbReference type="HPA" id="ENSG00000204531">
    <property type="expression patterns" value="Tissue enhanced (kidney)"/>
</dbReference>
<dbReference type="MalaCards" id="POU5F1"/>
<dbReference type="MIM" id="164177">
    <property type="type" value="gene"/>
</dbReference>
<dbReference type="neXtProt" id="NX_Q01860"/>
<dbReference type="OpenTargets" id="ENSG00000204531"/>
<dbReference type="PharmGKB" id="PA33545"/>
<dbReference type="VEuPathDB" id="HostDB:ENSG00000204531"/>
<dbReference type="eggNOG" id="KOG3802">
    <property type="taxonomic scope" value="Eukaryota"/>
</dbReference>
<dbReference type="GeneTree" id="ENSGT00940000155046"/>
<dbReference type="HOGENOM" id="CLU_066243_0_0_1"/>
<dbReference type="InParanoid" id="Q01860"/>
<dbReference type="OMA" id="CPQPYEF"/>
<dbReference type="OrthoDB" id="6358449at2759"/>
<dbReference type="PAN-GO" id="Q01860">
    <property type="GO annotations" value="3 GO annotations based on evolutionary models"/>
</dbReference>
<dbReference type="PhylomeDB" id="Q01860"/>
<dbReference type="TreeFam" id="TF316413"/>
<dbReference type="PathwayCommons" id="Q01860"/>
<dbReference type="Reactome" id="R-HSA-2892245">
    <property type="pathway name" value="POU5F1 (OCT4), SOX2, NANOG repress genes related to differentiation"/>
</dbReference>
<dbReference type="Reactome" id="R-HSA-2892247">
    <property type="pathway name" value="POU5F1 (OCT4), SOX2, NANOG activate genes related to proliferation"/>
</dbReference>
<dbReference type="Reactome" id="R-HSA-452723">
    <property type="pathway name" value="Transcriptional regulation of pluripotent stem cells"/>
</dbReference>
<dbReference type="Reactome" id="R-HSA-9754189">
    <property type="pathway name" value="Germ layer formation at gastrulation"/>
</dbReference>
<dbReference type="Reactome" id="R-HSA-9823739">
    <property type="pathway name" value="Formation of the anterior neural plate"/>
</dbReference>
<dbReference type="Reactome" id="R-HSA-9827857">
    <property type="pathway name" value="Specification of primordial germ cells"/>
</dbReference>
<dbReference type="Reactome" id="R-HSA-9834899">
    <property type="pathway name" value="Specification of the neural plate border"/>
</dbReference>
<dbReference type="SignaLink" id="Q01860"/>
<dbReference type="SIGNOR" id="Q01860"/>
<dbReference type="BioGRID-ORCS" id="5460">
    <property type="hits" value="111 hits in 1106 CRISPR screens"/>
</dbReference>
<dbReference type="CD-CODE" id="0DCC03B3">
    <property type="entry name" value="Synthetic Condensate 000178"/>
</dbReference>
<dbReference type="CD-CODE" id="38EC0B30">
    <property type="entry name" value="Transcriptional condensate"/>
</dbReference>
<dbReference type="CD-CODE" id="7231FD3C">
    <property type="entry name" value="Synthetic Condensate 000185"/>
</dbReference>
<dbReference type="GenomeRNAi" id="5460"/>
<dbReference type="Pharos" id="Q01860">
    <property type="development level" value="Tbio"/>
</dbReference>
<dbReference type="PRO" id="PR:Q01860"/>
<dbReference type="Proteomes" id="UP000005640">
    <property type="component" value="Chromosome 6"/>
</dbReference>
<dbReference type="RNAct" id="Q01860">
    <property type="molecule type" value="protein"/>
</dbReference>
<dbReference type="Bgee" id="ENSG00000204531">
    <property type="expression patterns" value="Expressed in primordial germ cell in gonad and 101 other cell types or tissues"/>
</dbReference>
<dbReference type="ExpressionAtlas" id="Q01860">
    <property type="expression patterns" value="baseline and differential"/>
</dbReference>
<dbReference type="GO" id="GO:0005737">
    <property type="term" value="C:cytoplasm"/>
    <property type="evidence" value="ECO:0000314"/>
    <property type="project" value="UniProtKB"/>
</dbReference>
<dbReference type="GO" id="GO:0005829">
    <property type="term" value="C:cytosol"/>
    <property type="evidence" value="ECO:0000314"/>
    <property type="project" value="HPA"/>
</dbReference>
<dbReference type="GO" id="GO:0005739">
    <property type="term" value="C:mitochondrion"/>
    <property type="evidence" value="ECO:0000314"/>
    <property type="project" value="HPA"/>
</dbReference>
<dbReference type="GO" id="GO:0005654">
    <property type="term" value="C:nucleoplasm"/>
    <property type="evidence" value="ECO:0000314"/>
    <property type="project" value="BHF-UCL"/>
</dbReference>
<dbReference type="GO" id="GO:0005634">
    <property type="term" value="C:nucleus"/>
    <property type="evidence" value="ECO:0000314"/>
    <property type="project" value="UniProtKB"/>
</dbReference>
<dbReference type="GO" id="GO:0005667">
    <property type="term" value="C:transcription regulator complex"/>
    <property type="evidence" value="ECO:0000314"/>
    <property type="project" value="BHF-UCL"/>
</dbReference>
<dbReference type="GO" id="GO:0003677">
    <property type="term" value="F:DNA binding"/>
    <property type="evidence" value="ECO:0000314"/>
    <property type="project" value="HGNC-UCL"/>
</dbReference>
<dbReference type="GO" id="GO:0003700">
    <property type="term" value="F:DNA-binding transcription factor activity"/>
    <property type="evidence" value="ECO:0000314"/>
    <property type="project" value="HGNC-UCL"/>
</dbReference>
<dbReference type="GO" id="GO:0000981">
    <property type="term" value="F:DNA-binding transcription factor activity, RNA polymerase II-specific"/>
    <property type="evidence" value="ECO:0000250"/>
    <property type="project" value="BHF-UCL"/>
</dbReference>
<dbReference type="GO" id="GO:0001227">
    <property type="term" value="F:DNA-binding transcription repressor activity, RNA polymerase II-specific"/>
    <property type="evidence" value="ECO:0000314"/>
    <property type="project" value="BHF-UCL"/>
</dbReference>
<dbReference type="GO" id="GO:0035198">
    <property type="term" value="F:miRNA binding"/>
    <property type="evidence" value="ECO:0000314"/>
    <property type="project" value="UniProtKB"/>
</dbReference>
<dbReference type="GO" id="GO:0003723">
    <property type="term" value="F:RNA binding"/>
    <property type="evidence" value="ECO:0007005"/>
    <property type="project" value="UniProtKB"/>
</dbReference>
<dbReference type="GO" id="GO:0000978">
    <property type="term" value="F:RNA polymerase II cis-regulatory region sequence-specific DNA binding"/>
    <property type="evidence" value="ECO:0000318"/>
    <property type="project" value="GO_Central"/>
</dbReference>
<dbReference type="GO" id="GO:0061629">
    <property type="term" value="F:RNA polymerase II-specific DNA-binding transcription factor binding"/>
    <property type="evidence" value="ECO:0000353"/>
    <property type="project" value="BHF-UCL"/>
</dbReference>
<dbReference type="GO" id="GO:0043565">
    <property type="term" value="F:sequence-specific DNA binding"/>
    <property type="evidence" value="ECO:0000314"/>
    <property type="project" value="MGI"/>
</dbReference>
<dbReference type="GO" id="GO:1990837">
    <property type="term" value="F:sequence-specific double-stranded DNA binding"/>
    <property type="evidence" value="ECO:0000314"/>
    <property type="project" value="ARUK-UCL"/>
</dbReference>
<dbReference type="GO" id="GO:0000976">
    <property type="term" value="F:transcription cis-regulatory region binding"/>
    <property type="evidence" value="ECO:0000314"/>
    <property type="project" value="BHF-UCL"/>
</dbReference>
<dbReference type="GO" id="GO:0031625">
    <property type="term" value="F:ubiquitin protein ligase binding"/>
    <property type="evidence" value="ECO:0000353"/>
    <property type="project" value="BHF-UCL"/>
</dbReference>
<dbReference type="GO" id="GO:0009653">
    <property type="term" value="P:anatomical structure morphogenesis"/>
    <property type="evidence" value="ECO:0000304"/>
    <property type="project" value="ProtInc"/>
</dbReference>
<dbReference type="GO" id="GO:0001824">
    <property type="term" value="P:blastocyst development"/>
    <property type="evidence" value="ECO:0000250"/>
    <property type="project" value="BHF-UCL"/>
</dbReference>
<dbReference type="GO" id="GO:0030509">
    <property type="term" value="P:BMP signaling pathway"/>
    <property type="evidence" value="ECO:0000314"/>
    <property type="project" value="BHF-UCL"/>
</dbReference>
<dbReference type="GO" id="GO:0060913">
    <property type="term" value="P:cardiac cell fate determination"/>
    <property type="evidence" value="ECO:0000314"/>
    <property type="project" value="BHF-UCL"/>
</dbReference>
<dbReference type="GO" id="GO:0060795">
    <property type="term" value="P:cell fate commitment involved in formation of primary germ layer"/>
    <property type="evidence" value="ECO:0000315"/>
    <property type="project" value="BHF-UCL"/>
</dbReference>
<dbReference type="GO" id="GO:0001714">
    <property type="term" value="P:endodermal cell fate specification"/>
    <property type="evidence" value="ECO:0000314"/>
    <property type="project" value="MGI"/>
</dbReference>
<dbReference type="GO" id="GO:0003133">
    <property type="term" value="P:endodermal-mesodermal cell signaling"/>
    <property type="evidence" value="ECO:0000314"/>
    <property type="project" value="BHF-UCL"/>
</dbReference>
<dbReference type="GO" id="GO:0003129">
    <property type="term" value="P:heart induction"/>
    <property type="evidence" value="ECO:0000315"/>
    <property type="project" value="BHF-UCL"/>
</dbReference>
<dbReference type="GO" id="GO:1902894">
    <property type="term" value="P:negative regulation of miRNA transcription"/>
    <property type="evidence" value="ECO:0000314"/>
    <property type="project" value="ARUK-UCL"/>
</dbReference>
<dbReference type="GO" id="GO:0000122">
    <property type="term" value="P:negative regulation of transcription by RNA polymerase II"/>
    <property type="evidence" value="ECO:0000314"/>
    <property type="project" value="BHF-UCL"/>
</dbReference>
<dbReference type="GO" id="GO:0090263">
    <property type="term" value="P:positive regulation of canonical Wnt signaling pathway"/>
    <property type="evidence" value="ECO:0000314"/>
    <property type="project" value="BHF-UCL"/>
</dbReference>
<dbReference type="GO" id="GO:0045944">
    <property type="term" value="P:positive regulation of transcription by RNA polymerase II"/>
    <property type="evidence" value="ECO:0000314"/>
    <property type="project" value="BHF-UCL"/>
</dbReference>
<dbReference type="GO" id="GO:0009786">
    <property type="term" value="P:regulation of asymmetric cell division"/>
    <property type="evidence" value="ECO:0000250"/>
    <property type="project" value="BHF-UCL"/>
</dbReference>
<dbReference type="GO" id="GO:0006355">
    <property type="term" value="P:regulation of DNA-templated transcription"/>
    <property type="evidence" value="ECO:0000314"/>
    <property type="project" value="HGNC-UCL"/>
</dbReference>
<dbReference type="GO" id="GO:0010468">
    <property type="term" value="P:regulation of gene expression"/>
    <property type="evidence" value="ECO:0000315"/>
    <property type="project" value="UniProtKB"/>
</dbReference>
<dbReference type="GO" id="GO:0006357">
    <property type="term" value="P:regulation of transcription by RNA polymerase II"/>
    <property type="evidence" value="ECO:0000250"/>
    <property type="project" value="BHF-UCL"/>
</dbReference>
<dbReference type="GO" id="GO:0009611">
    <property type="term" value="P:response to wounding"/>
    <property type="evidence" value="ECO:0000270"/>
    <property type="project" value="UniProtKB"/>
</dbReference>
<dbReference type="GO" id="GO:0035019">
    <property type="term" value="P:somatic stem cell population maintenance"/>
    <property type="evidence" value="ECO:0000314"/>
    <property type="project" value="UniProtKB"/>
</dbReference>
<dbReference type="CDD" id="cd00086">
    <property type="entry name" value="homeodomain"/>
    <property type="match status" value="1"/>
</dbReference>
<dbReference type="FunFam" id="1.10.10.60:FF:000161">
    <property type="entry name" value="POU domain protein"/>
    <property type="match status" value="1"/>
</dbReference>
<dbReference type="FunFam" id="1.10.260.40:FF:000022">
    <property type="entry name" value="POU domain protein"/>
    <property type="match status" value="1"/>
</dbReference>
<dbReference type="Gene3D" id="1.10.10.60">
    <property type="entry name" value="Homeodomain-like"/>
    <property type="match status" value="1"/>
</dbReference>
<dbReference type="Gene3D" id="1.10.260.40">
    <property type="entry name" value="lambda repressor-like DNA-binding domains"/>
    <property type="match status" value="1"/>
</dbReference>
<dbReference type="InterPro" id="IPR001356">
    <property type="entry name" value="HD"/>
</dbReference>
<dbReference type="InterPro" id="IPR017970">
    <property type="entry name" value="Homeobox_CS"/>
</dbReference>
<dbReference type="InterPro" id="IPR009057">
    <property type="entry name" value="Homeodomain-like_sf"/>
</dbReference>
<dbReference type="InterPro" id="IPR010982">
    <property type="entry name" value="Lambda_DNA-bd_dom_sf"/>
</dbReference>
<dbReference type="InterPro" id="IPR013847">
    <property type="entry name" value="POU"/>
</dbReference>
<dbReference type="InterPro" id="IPR000327">
    <property type="entry name" value="POU_dom"/>
</dbReference>
<dbReference type="InterPro" id="IPR050255">
    <property type="entry name" value="POU_domain_TF"/>
</dbReference>
<dbReference type="PANTHER" id="PTHR11636">
    <property type="entry name" value="POU DOMAIN"/>
    <property type="match status" value="1"/>
</dbReference>
<dbReference type="PANTHER" id="PTHR11636:SF86">
    <property type="entry name" value="POU DOMAIN, CLASS 5, TRANSCRIPTION FACTOR 1-RELATED"/>
    <property type="match status" value="1"/>
</dbReference>
<dbReference type="Pfam" id="PF00046">
    <property type="entry name" value="Homeodomain"/>
    <property type="match status" value="1"/>
</dbReference>
<dbReference type="Pfam" id="PF00157">
    <property type="entry name" value="Pou"/>
    <property type="match status" value="1"/>
</dbReference>
<dbReference type="PRINTS" id="PR00028">
    <property type="entry name" value="POUDOMAIN"/>
</dbReference>
<dbReference type="SMART" id="SM00389">
    <property type="entry name" value="HOX"/>
    <property type="match status" value="1"/>
</dbReference>
<dbReference type="SMART" id="SM00352">
    <property type="entry name" value="POU"/>
    <property type="match status" value="1"/>
</dbReference>
<dbReference type="SUPFAM" id="SSF46689">
    <property type="entry name" value="Homeodomain-like"/>
    <property type="match status" value="1"/>
</dbReference>
<dbReference type="SUPFAM" id="SSF47413">
    <property type="entry name" value="lambda repressor-like DNA-binding domains"/>
    <property type="match status" value="1"/>
</dbReference>
<dbReference type="PROSITE" id="PS00027">
    <property type="entry name" value="HOMEOBOX_1"/>
    <property type="match status" value="1"/>
</dbReference>
<dbReference type="PROSITE" id="PS50071">
    <property type="entry name" value="HOMEOBOX_2"/>
    <property type="match status" value="1"/>
</dbReference>
<dbReference type="PROSITE" id="PS00035">
    <property type="entry name" value="POU_1"/>
    <property type="match status" value="1"/>
</dbReference>
<dbReference type="PROSITE" id="PS00465">
    <property type="entry name" value="POU_2"/>
    <property type="match status" value="1"/>
</dbReference>
<dbReference type="PROSITE" id="PS51179">
    <property type="entry name" value="POU_3"/>
    <property type="match status" value="1"/>
</dbReference>
<reference key="1">
    <citation type="journal article" date="1992" name="Nucleic Acids Res.">
        <title>Human Oct3 gene family: cDNA sequences, alternative splicing, gene organization, chromosomal location, and expression at low levels in adult tissues.</title>
        <authorList>
            <person name="Takeda J."/>
            <person name="Seino S."/>
            <person name="Bell G.I."/>
        </authorList>
    </citation>
    <scope>NUCLEOTIDE SEQUENCE [MRNA] (ISOFORMS A AND B)</scope>
    <scope>VARIANTS ALA-322 AND LEU-357</scope>
    <scope>TISSUE SPECIFICITY</scope>
    <source>
        <tissue>Kidney</tissue>
    </source>
</reference>
<reference key="2">
    <citation type="journal article" date="2010" name="Tissue Antigens">
        <title>Comparison of MHC class I risk haplotypes in Thai and Caucasian psoriatics shows locus heterogeneity at PSORS1.</title>
        <authorList>
            <person name="Stuart P.E."/>
            <person name="Nair R.P."/>
            <person name="Hiremagalore R."/>
            <person name="Kullavanijaya P."/>
            <person name="Kullavanijaya P."/>
            <person name="Tejasvi T."/>
            <person name="Lim H.W."/>
            <person name="Voorhees J.J."/>
            <person name="Elder J.T."/>
        </authorList>
    </citation>
    <scope>NUCLEOTIDE SEQUENCE [GENOMIC DNA]</scope>
    <source>
        <tissue>Blood</tissue>
    </source>
</reference>
<reference key="3">
    <citation type="journal article" date="2006" name="Genetics">
        <title>Rapid evolution of major histocompatibility complex class I genes in primates generates new disease alleles in humans via hitchhiking diversity.</title>
        <authorList>
            <person name="Shiina T."/>
            <person name="Ota M."/>
            <person name="Shimizu S."/>
            <person name="Katsuyama Y."/>
            <person name="Hashimoto N."/>
            <person name="Takasu M."/>
            <person name="Anzai T."/>
            <person name="Kulski J.K."/>
            <person name="Kikkawa E."/>
            <person name="Naruse T."/>
            <person name="Kimura N."/>
            <person name="Yanagiya K."/>
            <person name="Watanabe A."/>
            <person name="Hosomichi K."/>
            <person name="Kohara S."/>
            <person name="Iwamoto C."/>
            <person name="Umehara Y."/>
            <person name="Meyer A."/>
            <person name="Wanner V."/>
            <person name="Sano K."/>
            <person name="Macquin C."/>
            <person name="Ikeo K."/>
            <person name="Tokunaga K."/>
            <person name="Gojobori T."/>
            <person name="Inoko H."/>
            <person name="Bahram S."/>
        </authorList>
    </citation>
    <scope>NUCLEOTIDE SEQUENCE [GENOMIC DNA]</scope>
    <source>
        <tissue>Peripheral blood leukocyte</tissue>
    </source>
</reference>
<reference key="4">
    <citation type="submission" date="1999-09" db="EMBL/GenBank/DDBJ databases">
        <title>Homo sapiens 2,229,817bp genomic DNA of 6p21.3 HLA class I region.</title>
        <authorList>
            <person name="Shiina S."/>
            <person name="Tamiya G."/>
            <person name="Oka A."/>
            <person name="Inoko H."/>
        </authorList>
    </citation>
    <scope>NUCLEOTIDE SEQUENCE [LARGE SCALE GENOMIC DNA]</scope>
</reference>
<reference key="5">
    <citation type="journal article" date="2003" name="Nature">
        <title>The DNA sequence and analysis of human chromosome 6.</title>
        <authorList>
            <person name="Mungall A.J."/>
            <person name="Palmer S.A."/>
            <person name="Sims S.K."/>
            <person name="Edwards C.A."/>
            <person name="Ashurst J.L."/>
            <person name="Wilming L."/>
            <person name="Jones M.C."/>
            <person name="Horton R."/>
            <person name="Hunt S.E."/>
            <person name="Scott C.E."/>
            <person name="Gilbert J.G.R."/>
            <person name="Clamp M.E."/>
            <person name="Bethel G."/>
            <person name="Milne S."/>
            <person name="Ainscough R."/>
            <person name="Almeida J.P."/>
            <person name="Ambrose K.D."/>
            <person name="Andrews T.D."/>
            <person name="Ashwell R.I.S."/>
            <person name="Babbage A.K."/>
            <person name="Bagguley C.L."/>
            <person name="Bailey J."/>
            <person name="Banerjee R."/>
            <person name="Barker D.J."/>
            <person name="Barlow K.F."/>
            <person name="Bates K."/>
            <person name="Beare D.M."/>
            <person name="Beasley H."/>
            <person name="Beasley O."/>
            <person name="Bird C.P."/>
            <person name="Blakey S.E."/>
            <person name="Bray-Allen S."/>
            <person name="Brook J."/>
            <person name="Brown A.J."/>
            <person name="Brown J.Y."/>
            <person name="Burford D.C."/>
            <person name="Burrill W."/>
            <person name="Burton J."/>
            <person name="Carder C."/>
            <person name="Carter N.P."/>
            <person name="Chapman J.C."/>
            <person name="Clark S.Y."/>
            <person name="Clark G."/>
            <person name="Clee C.M."/>
            <person name="Clegg S."/>
            <person name="Cobley V."/>
            <person name="Collier R.E."/>
            <person name="Collins J.E."/>
            <person name="Colman L.K."/>
            <person name="Corby N.R."/>
            <person name="Coville G.J."/>
            <person name="Culley K.M."/>
            <person name="Dhami P."/>
            <person name="Davies J."/>
            <person name="Dunn M."/>
            <person name="Earthrowl M.E."/>
            <person name="Ellington A.E."/>
            <person name="Evans K.A."/>
            <person name="Faulkner L."/>
            <person name="Francis M.D."/>
            <person name="Frankish A."/>
            <person name="Frankland J."/>
            <person name="French L."/>
            <person name="Garner P."/>
            <person name="Garnett J."/>
            <person name="Ghori M.J."/>
            <person name="Gilby L.M."/>
            <person name="Gillson C.J."/>
            <person name="Glithero R.J."/>
            <person name="Grafham D.V."/>
            <person name="Grant M."/>
            <person name="Gribble S."/>
            <person name="Griffiths C."/>
            <person name="Griffiths M.N.D."/>
            <person name="Hall R."/>
            <person name="Halls K.S."/>
            <person name="Hammond S."/>
            <person name="Harley J.L."/>
            <person name="Hart E.A."/>
            <person name="Heath P.D."/>
            <person name="Heathcott R."/>
            <person name="Holmes S.J."/>
            <person name="Howden P.J."/>
            <person name="Howe K.L."/>
            <person name="Howell G.R."/>
            <person name="Huckle E."/>
            <person name="Humphray S.J."/>
            <person name="Humphries M.D."/>
            <person name="Hunt A.R."/>
            <person name="Johnson C.M."/>
            <person name="Joy A.A."/>
            <person name="Kay M."/>
            <person name="Keenan S.J."/>
            <person name="Kimberley A.M."/>
            <person name="King A."/>
            <person name="Laird G.K."/>
            <person name="Langford C."/>
            <person name="Lawlor S."/>
            <person name="Leongamornlert D.A."/>
            <person name="Leversha M."/>
            <person name="Lloyd C.R."/>
            <person name="Lloyd D.M."/>
            <person name="Loveland J.E."/>
            <person name="Lovell J."/>
            <person name="Martin S."/>
            <person name="Mashreghi-Mohammadi M."/>
            <person name="Maslen G.L."/>
            <person name="Matthews L."/>
            <person name="McCann O.T."/>
            <person name="McLaren S.J."/>
            <person name="McLay K."/>
            <person name="McMurray A."/>
            <person name="Moore M.J.F."/>
            <person name="Mullikin J.C."/>
            <person name="Niblett D."/>
            <person name="Nickerson T."/>
            <person name="Novik K.L."/>
            <person name="Oliver K."/>
            <person name="Overton-Larty E.K."/>
            <person name="Parker A."/>
            <person name="Patel R."/>
            <person name="Pearce A.V."/>
            <person name="Peck A.I."/>
            <person name="Phillimore B.J.C.T."/>
            <person name="Phillips S."/>
            <person name="Plumb R.W."/>
            <person name="Porter K.M."/>
            <person name="Ramsey Y."/>
            <person name="Ranby S.A."/>
            <person name="Rice C.M."/>
            <person name="Ross M.T."/>
            <person name="Searle S.M."/>
            <person name="Sehra H.K."/>
            <person name="Sheridan E."/>
            <person name="Skuce C.D."/>
            <person name="Smith S."/>
            <person name="Smith M."/>
            <person name="Spraggon L."/>
            <person name="Squares S.L."/>
            <person name="Steward C.A."/>
            <person name="Sycamore N."/>
            <person name="Tamlyn-Hall G."/>
            <person name="Tester J."/>
            <person name="Theaker A.J."/>
            <person name="Thomas D.W."/>
            <person name="Thorpe A."/>
            <person name="Tracey A."/>
            <person name="Tromans A."/>
            <person name="Tubby B."/>
            <person name="Wall M."/>
            <person name="Wallis J.M."/>
            <person name="West A.P."/>
            <person name="White S.S."/>
            <person name="Whitehead S.L."/>
            <person name="Whittaker H."/>
            <person name="Wild A."/>
            <person name="Willey D.J."/>
            <person name="Wilmer T.E."/>
            <person name="Wood J.M."/>
            <person name="Wray P.W."/>
            <person name="Wyatt J.C."/>
            <person name="Young L."/>
            <person name="Younger R.M."/>
            <person name="Bentley D.R."/>
            <person name="Coulson A."/>
            <person name="Durbin R.M."/>
            <person name="Hubbard T."/>
            <person name="Sulston J.E."/>
            <person name="Dunham I."/>
            <person name="Rogers J."/>
            <person name="Beck S."/>
        </authorList>
    </citation>
    <scope>NUCLEOTIDE SEQUENCE [LARGE SCALE GENOMIC DNA]</scope>
</reference>
<reference key="6">
    <citation type="submission" date="2005-07" db="EMBL/GenBank/DDBJ databases">
        <authorList>
            <person name="Mural R.J."/>
            <person name="Istrail S."/>
            <person name="Sutton G.G."/>
            <person name="Florea L."/>
            <person name="Halpern A.L."/>
            <person name="Mobarry C.M."/>
            <person name="Lippert R."/>
            <person name="Walenz B."/>
            <person name="Shatkay H."/>
            <person name="Dew I."/>
            <person name="Miller J.R."/>
            <person name="Flanigan M.J."/>
            <person name="Edwards N.J."/>
            <person name="Bolanos R."/>
            <person name="Fasulo D."/>
            <person name="Halldorsson B.V."/>
            <person name="Hannenhalli S."/>
            <person name="Turner R."/>
            <person name="Yooseph S."/>
            <person name="Lu F."/>
            <person name="Nusskern D.R."/>
            <person name="Shue B.C."/>
            <person name="Zheng X.H."/>
            <person name="Zhong F."/>
            <person name="Delcher A.L."/>
            <person name="Huson D.H."/>
            <person name="Kravitz S.A."/>
            <person name="Mouchard L."/>
            <person name="Reinert K."/>
            <person name="Remington K.A."/>
            <person name="Clark A.G."/>
            <person name="Waterman M.S."/>
            <person name="Eichler E.E."/>
            <person name="Adams M.D."/>
            <person name="Hunkapiller M.W."/>
            <person name="Myers E.W."/>
            <person name="Venter J.C."/>
        </authorList>
    </citation>
    <scope>NUCLEOTIDE SEQUENCE [LARGE SCALE GENOMIC DNA]</scope>
</reference>
<reference key="7">
    <citation type="journal article" date="2004" name="Genome Res.">
        <title>The status, quality, and expansion of the NIH full-length cDNA project: the Mammalian Gene Collection (MGC).</title>
        <authorList>
            <consortium name="The MGC Project Team"/>
        </authorList>
    </citation>
    <scope>NUCLEOTIDE SEQUENCE [LARGE SCALE MRNA]</scope>
    <source>
        <tissue>Lung</tissue>
    </source>
</reference>
<reference key="8">
    <citation type="journal article" date="1994" name="Eur. J. Biochem.">
        <title>A human POU domain gene, mPOU, is expressed in developing brain and specific adult tissues.</title>
        <authorList>
            <person name="Wey E."/>
            <person name="Lyons G.E."/>
            <person name="Schaefer B.W."/>
        </authorList>
    </citation>
    <scope>NUCLEOTIDE SEQUENCE [MRNA] OF 188-274</scope>
    <scope>TISSUE SPECIFICITY</scope>
    <source>
        <tissue>Heart</tissue>
        <tissue>Skeletal muscle</tissue>
    </source>
</reference>
<reference key="9">
    <citation type="journal article" date="1995" name="Hum. Reprod.">
        <title>Expression of transcription regulating genes in human preimplantation embryos.</title>
        <authorList>
            <person name="Abdel-Rahman B."/>
            <person name="Fiddler M."/>
            <person name="Rappolee D."/>
            <person name="Pergament E."/>
        </authorList>
    </citation>
    <scope>NUCLEOTIDE SEQUENCE [MRNA] OF 212-283</scope>
</reference>
<reference key="10">
    <citation type="journal article" date="2005" name="Biochem. Biophys. Res. Commun.">
        <title>Oct4 pseudogenes are transcribed in cancers.</title>
        <authorList>
            <person name="Suo G."/>
            <person name="Han J."/>
            <person name="Wang X."/>
            <person name="Zhang J."/>
            <person name="Zhao Y."/>
            <person name="Zhao Y."/>
            <person name="Dai J."/>
        </authorList>
    </citation>
    <scope>IDENTIFICATION</scope>
</reference>
<reference key="11">
    <citation type="journal article" date="2007" name="Cell">
        <title>Induction of pluripotent stem cells from adult human fibroblasts by defined factors.</title>
        <authorList>
            <person name="Takahashi K."/>
            <person name="Tanabe K."/>
            <person name="Ohnuki M."/>
            <person name="Narita M."/>
            <person name="Ichisaka T."/>
            <person name="Tomoda K."/>
            <person name="Yamanaka S."/>
        </authorList>
    </citation>
    <scope>BIOTECHNOLOGY</scope>
    <scope>FUNCTION</scope>
</reference>
<reference key="12">
    <citation type="journal article" date="2008" name="Int. J. Biochem. Cell Biol.">
        <title>Pyruvate kinase isozyme type M2 (PKM2) interacts and cooperates with Oct-4 in regulating transcription.</title>
        <authorList>
            <person name="Lee J."/>
            <person name="Kim H.K."/>
            <person name="Han Y.-M."/>
            <person name="Kim J."/>
        </authorList>
    </citation>
    <scope>INTERACTION WITH PKM</scope>
    <scope>SUBCELLULAR LOCATION</scope>
    <scope>DOMAIN</scope>
    <scope>INDUCTION</scope>
</reference>
<reference key="13">
    <citation type="journal article" date="2009" name="Cell Res.">
        <title>WWP2 promotes degradation of transcription factor OCT4 in human embryonic stem cells.</title>
        <authorList>
            <person name="Xu H."/>
            <person name="Wang W."/>
            <person name="Li C."/>
            <person name="Yu H."/>
            <person name="Yang A."/>
            <person name="Wang B."/>
            <person name="Jin Y."/>
        </authorList>
    </citation>
    <scope>UBIQUITINATION</scope>
    <scope>SUBCELLULAR LOCATION</scope>
    <scope>DEVELOPMENTAL STAGE</scope>
    <scope>INTERACTION WITH WWP2</scope>
</reference>
<reference key="14">
    <citation type="journal article" date="2012" name="J. Biol. Chem.">
        <title>Serine 111 phosphorylation regulates OCT4A protein subcellular distribution and degradation.</title>
        <authorList>
            <person name="Spelat R."/>
            <person name="Ferro F."/>
            <person name="Curcio F."/>
        </authorList>
    </citation>
    <scope>PHOSPHORYLATION AT SER-111</scope>
    <scope>SUBCELLULAR LOCATION</scope>
</reference>
<reference key="15">
    <citation type="journal article" date="2012" name="Proc. Natl. Acad. Sci. U.S.A.">
        <title>Phosphorylation regulates human OCT4.</title>
        <authorList>
            <person name="Brumbaugh J."/>
            <person name="Hou Z."/>
            <person name="Russell J.D."/>
            <person name="Howden S.E."/>
            <person name="Yu P."/>
            <person name="Ledvina A.R."/>
            <person name="Coon J.J."/>
            <person name="Thomson J.A."/>
        </authorList>
    </citation>
    <scope>PHOSPHORYLATION AT SER-111; THR-235; SER-236; SER-289; SER-290 AND SER-355</scope>
</reference>
<reference key="16">
    <citation type="journal article" date="2015" name="Sci. Rep.">
        <title>The variant Polycomb Repressor Complex 1 component PCGF1 interacts with a pluripotency sub-network that includes DPPA4, a regulator of embryogenesis.</title>
        <authorList>
            <person name="Oliviero G."/>
            <person name="Munawar N."/>
            <person name="Watson A."/>
            <person name="Streubel G."/>
            <person name="Manning G."/>
            <person name="Bardwell V."/>
            <person name="Bracken A.P."/>
            <person name="Cagney G."/>
        </authorList>
    </citation>
    <scope>IDENTIFICATION BY MASS SPECTROMETRY</scope>
    <scope>INTERACTION WITH PCGF1</scope>
</reference>
<reference key="17">
    <citation type="journal article" date="2016" name="J. Biol. Chem.">
        <title>Germ cell nuclear factor (GCNF) represses Oct4 expression and globally modulates gene expression in human embryonic stem (hES) cells.</title>
        <authorList>
            <person name="Wang H."/>
            <person name="Wang X."/>
            <person name="Xu X."/>
            <person name="Kyba M."/>
            <person name="Cooney A.J."/>
        </authorList>
    </citation>
    <scope>INDUCTION</scope>
</reference>
<reference key="18">
    <citation type="journal article" date="2021" name="Stem. Cell. Rev. Rep.">
        <title>The 9aaTAD Activation Domains in the Yamanaka Transcription Factors Oct4, Sox2, Myc, and Klf4.</title>
        <authorList>
            <person name="Piskacek M."/>
            <person name="Otasevic T."/>
            <person name="Repko M."/>
            <person name="Knight A."/>
        </authorList>
    </citation>
    <scope>9AATAD MOTIF</scope>
</reference>
<protein>
    <recommendedName>
        <fullName>POU domain, class 5, transcription factor 1</fullName>
    </recommendedName>
    <alternativeName>
        <fullName>Octamer-binding protein 3</fullName>
        <shortName>Oct-3</shortName>
    </alternativeName>
    <alternativeName>
        <fullName>Octamer-binding protein 4</fullName>
        <shortName>Oct-4</shortName>
    </alternativeName>
    <alternativeName>
        <fullName>Octamer-binding transcription factor 3</fullName>
        <shortName>OTF-3</shortName>
    </alternativeName>
</protein>
<feature type="chain" id="PRO_0000100747" description="POU domain, class 5, transcription factor 1">
    <location>
        <begin position="1"/>
        <end position="360"/>
    </location>
</feature>
<feature type="domain" description="POU-specific" evidence="3">
    <location>
        <begin position="138"/>
        <end position="212"/>
    </location>
</feature>
<feature type="DNA-binding region" description="Homeobox" evidence="2">
    <location>
        <begin position="230"/>
        <end position="289"/>
    </location>
</feature>
<feature type="region of interest" description="Disordered" evidence="4">
    <location>
        <begin position="1"/>
        <end position="52"/>
    </location>
</feature>
<feature type="region of interest" description="Disordered" evidence="4">
    <location>
        <begin position="88"/>
        <end position="114"/>
    </location>
</feature>
<feature type="region of interest" description="DNA-binding" evidence="1">
    <location>
        <begin position="180"/>
        <end position="186"/>
    </location>
</feature>
<feature type="region of interest" description="DNA-binding" evidence="1">
    <location>
        <begin position="193"/>
        <end position="196"/>
    </location>
</feature>
<feature type="short sequence motif" description="9aaTAD" evidence="13">
    <location>
        <begin position="4"/>
        <end position="12"/>
    </location>
</feature>
<feature type="binding site" evidence="1">
    <location>
        <position position="157"/>
    </location>
    <ligand>
        <name>DNA</name>
        <dbReference type="ChEBI" id="CHEBI:16991"/>
    </ligand>
</feature>
<feature type="binding site" evidence="1">
    <location>
        <position position="164"/>
    </location>
    <ligand>
        <name>DNA</name>
        <dbReference type="ChEBI" id="CHEBI:16991"/>
    </ligand>
</feature>
<feature type="modified residue" description="Phosphoserine; by MAPK" evidence="9 10">
    <location>
        <position position="111"/>
    </location>
</feature>
<feature type="modified residue" description="Phosphothreonine" evidence="9">
    <location>
        <position position="235"/>
    </location>
</feature>
<feature type="modified residue" description="Phosphoserine" evidence="9">
    <location>
        <position position="236"/>
    </location>
</feature>
<feature type="modified residue" description="Phosphoserine" evidence="9">
    <location>
        <position position="289"/>
    </location>
</feature>
<feature type="modified residue" description="Phosphoserine" evidence="9">
    <location>
        <position position="290"/>
    </location>
</feature>
<feature type="modified residue" description="Phosphoserine" evidence="9">
    <location>
        <position position="355"/>
    </location>
</feature>
<feature type="cross-link" description="Glycyl lysine isopeptide (Lys-Gly) (interchain with G-Cter in SUMO)" evidence="1">
    <location>
        <position position="123"/>
    </location>
</feature>
<feature type="splice variant" id="VSP_002333" description="In isoform B." evidence="15">
    <original>MAGHLASDFAFSPPPGGGGDGPGGPEPGWVDPRTWLSFQGPPGGPGIGPGVGPGSEVWGIPPCPPPYEFCGGMAYCGPQVGVGLVPQGGLETSQPEGEAGVGVESNSDGASPEPCTVTPGAVKLEKEKLEQNPEE</original>
    <variation>MHFYRLFLGATRRFLNPEWKGEIDNWCVYVLTSLLPFKIQ</variation>
    <location>
        <begin position="1"/>
        <end position="135"/>
    </location>
</feature>
<feature type="sequence variant" id="VAR_046203" description="In dbSNP:rs1150767.">
    <original>L</original>
    <variation>F</variation>
    <location>
        <position position="226"/>
    </location>
</feature>
<feature type="sequence variant" id="VAR_003774" evidence="5">
    <original>T</original>
    <variation>A</variation>
    <location>
        <position position="322"/>
    </location>
</feature>
<feature type="sequence variant" id="VAR_046204" description="In dbSNP:rs1061120.">
    <original>T</original>
    <variation>I</variation>
    <location>
        <position position="351"/>
    </location>
</feature>
<feature type="sequence variant" id="VAR_003775" evidence="5">
    <original>M</original>
    <variation>L</variation>
    <location>
        <position position="357"/>
    </location>
</feature>
<feature type="sequence conflict" description="In Ref. 8; CAA79974." evidence="16" ref="8">
    <original>A</original>
    <variation>G</variation>
    <location>
        <position position="189"/>
    </location>
</feature>
<feature type="sequence conflict" description="In Ref. 8; CAA79974." evidence="16" ref="8">
    <original>I</original>
    <variation>T</variation>
    <location>
        <position position="220"/>
    </location>
</feature>
<feature type="sequence conflict" description="In Ref. 8; CAA79974." evidence="16" ref="8">
    <original>V</original>
    <variation>L</variation>
    <location>
        <position position="227"/>
    </location>
</feature>
<feature type="sequence conflict" description="In Ref. 8; CAA79975." evidence="16" ref="8">
    <original>R</original>
    <variation>G</variation>
    <location>
        <position position="230"/>
    </location>
</feature>
<feature type="sequence conflict" description="In Ref. 8; CAA79975." evidence="16" ref="8">
    <original>R</original>
    <variation>Q</variation>
    <location>
        <position position="240"/>
    </location>
</feature>
<feature type="sequence conflict" description="In Ref. 8; CAA79975." evidence="16" ref="8">
    <original>Q</original>
    <variation>R</variation>
    <location>
        <position position="251"/>
    </location>
</feature>
<feature type="sequence conflict" description="In Ref. 9; AAB35990." evidence="16" ref="9">
    <original>D</original>
    <variation>DVVR</variation>
    <location>
        <position position="272"/>
    </location>
</feature>
<feature type="helix" evidence="17">
    <location>
        <begin position="142"/>
        <end position="160"/>
    </location>
</feature>
<feature type="helix" evidence="17">
    <location>
        <begin position="164"/>
        <end position="175"/>
    </location>
</feature>
<feature type="helix" evidence="17">
    <location>
        <begin position="181"/>
        <end position="188"/>
    </location>
</feature>
<feature type="helix" evidence="17">
    <location>
        <begin position="194"/>
        <end position="210"/>
    </location>
</feature>
<feature type="helix" evidence="17">
    <location>
        <begin position="216"/>
        <end position="219"/>
    </location>
</feature>
<feature type="helix" evidence="17">
    <location>
        <begin position="239"/>
        <end position="248"/>
    </location>
</feature>
<feature type="turn" evidence="17">
    <location>
        <begin position="249"/>
        <end position="251"/>
    </location>
</feature>
<feature type="helix" evidence="17">
    <location>
        <begin position="257"/>
        <end position="267"/>
    </location>
</feature>
<feature type="helix" evidence="17">
    <location>
        <begin position="271"/>
        <end position="287"/>
    </location>
</feature>
<organism>
    <name type="scientific">Homo sapiens</name>
    <name type="common">Human</name>
    <dbReference type="NCBI Taxonomy" id="9606"/>
    <lineage>
        <taxon>Eukaryota</taxon>
        <taxon>Metazoa</taxon>
        <taxon>Chordata</taxon>
        <taxon>Craniata</taxon>
        <taxon>Vertebrata</taxon>
        <taxon>Euteleostomi</taxon>
        <taxon>Mammalia</taxon>
        <taxon>Eutheria</taxon>
        <taxon>Euarchontoglires</taxon>
        <taxon>Primates</taxon>
        <taxon>Haplorrhini</taxon>
        <taxon>Catarrhini</taxon>
        <taxon>Hominidae</taxon>
        <taxon>Homo</taxon>
    </lineage>
</organism>
<keyword id="KW-0002">3D-structure</keyword>
<keyword id="KW-0025">Alternative splicing</keyword>
<keyword id="KW-0963">Cytoplasm</keyword>
<keyword id="KW-0217">Developmental protein</keyword>
<keyword id="KW-0238">DNA-binding</keyword>
<keyword id="KW-0371">Homeobox</keyword>
<keyword id="KW-1017">Isopeptide bond</keyword>
<keyword id="KW-0539">Nucleus</keyword>
<keyword id="KW-0597">Phosphoprotein</keyword>
<keyword id="KW-1267">Proteomics identification</keyword>
<keyword id="KW-1185">Reference proteome</keyword>
<keyword id="KW-0804">Transcription</keyword>
<keyword id="KW-0805">Transcription regulation</keyword>
<keyword id="KW-0832">Ubl conjugation</keyword>
<name>PO5F1_HUMAN</name>